<reference key="1">
    <citation type="journal article" date="2015" name="Genome Announc.">
        <title>Genome sequence of Aspergillus flavus NRRL 3357, a strain that causes aflatoxin contamination of food and feed.</title>
        <authorList>
            <person name="Nierman W.C."/>
            <person name="Yu J."/>
            <person name="Fedorova-Abrams N.D."/>
            <person name="Losada L."/>
            <person name="Cleveland T.E."/>
            <person name="Bhatnagar D."/>
            <person name="Bennett J.W."/>
            <person name="Dean R."/>
            <person name="Payne G.A."/>
        </authorList>
    </citation>
    <scope>NUCLEOTIDE SEQUENCE [LARGE SCALE GENOMIC DNA]</scope>
    <source>
        <strain>ATCC 200026 / FGSC A1120 / IAM 13836 / NRRL 3357 / JCM 12722 / SRRC 167</strain>
    </source>
</reference>
<reference key="2">
    <citation type="submission" date="2020-07" db="EMBL/GenBank/DDBJ databases">
        <title>Two New Chromosome-Level Aspergillus flavus Reference Genomes Reveal a Large Insertion Potentially Contributing to Isolate Stress Tolerance and Aflatoxin Production.</title>
        <authorList>
            <person name="Fountain J.C."/>
            <person name="Clevenger J.P."/>
            <person name="Nadon B."/>
            <person name="Youngblood R.C."/>
            <person name="Korani W."/>
            <person name="Chang P.-K."/>
            <person name="Starr D."/>
            <person name="Wang H."/>
            <person name="Isett B."/>
            <person name="Johnston H.R."/>
            <person name="Wiggins R."/>
            <person name="Chu Y."/>
            <person name="Agarwal G."/>
            <person name="Kemerait R.C."/>
            <person name="Pandey M.K."/>
            <person name="Bhatnagar D."/>
            <person name="Ozias-Akins P."/>
            <person name="Varshney R.K."/>
            <person name="Scheffler B.E."/>
            <person name="Vaughn J.N."/>
            <person name="Guo B."/>
        </authorList>
    </citation>
    <scope>NUCLEOTIDE SEQUENCE [LARGE SCALE GENOMIC DNA]</scope>
    <source>
        <strain>ATCC 200026 / FGSC A1120 / IAM 13836 / NRRL 3357 / JCM 12722 / SRRC 167</strain>
    </source>
</reference>
<reference key="3">
    <citation type="journal article" date="2016" name="Fungal Genet. Biol.">
        <title>Class of cyclic ribosomal peptide synthetic genes in filamentous fungi.</title>
        <authorList>
            <person name="Nagano N."/>
            <person name="Umemura M."/>
            <person name="Izumikawa M."/>
            <person name="Kawano J."/>
            <person name="Ishii T."/>
            <person name="Kikuchi M."/>
            <person name="Tomii K."/>
            <person name="Kumagai T."/>
            <person name="Yoshimi A."/>
            <person name="Machida M."/>
            <person name="Abe K."/>
            <person name="Shin-ya K."/>
            <person name="Asai K."/>
        </authorList>
    </citation>
    <scope>IDENTIFICATION</scope>
    <scope>FUNCTION</scope>
    <scope>DISRUPTION PHENOTYPE</scope>
    <scope>PATHWAY</scope>
</reference>
<reference key="4">
    <citation type="journal article" date="2018" name="Org. Biomol. Chem.">
        <title>Heterologous production of asperipin-2a: proposal for sequential oxidative macrocyclization by a fungi-specific DUF3328 oxidase.</title>
        <authorList>
            <person name="Ye Y."/>
            <person name="Ozaki T."/>
            <person name="Umemura M."/>
            <person name="Liu C."/>
            <person name="Minami A."/>
            <person name="Oikawa H."/>
        </authorList>
    </citation>
    <scope>FUNCTION</scope>
    <scope>PATHWAY</scope>
</reference>
<evidence type="ECO:0000250" key="1">
    <source>
        <dbReference type="UniProtKB" id="B8NM67"/>
    </source>
</evidence>
<evidence type="ECO:0000255" key="2"/>
<evidence type="ECO:0000255" key="3">
    <source>
        <dbReference type="PROSITE-ProRule" id="PRU00498"/>
    </source>
</evidence>
<evidence type="ECO:0000256" key="4">
    <source>
        <dbReference type="SAM" id="MobiDB-lite"/>
    </source>
</evidence>
<evidence type="ECO:0000269" key="5">
    <source>
    </source>
</evidence>
<evidence type="ECO:0000269" key="6">
    <source>
    </source>
</evidence>
<evidence type="ECO:0000303" key="7">
    <source>
    </source>
</evidence>
<evidence type="ECO:0000305" key="8"/>
<evidence type="ECO:0000305" key="9">
    <source>
    </source>
</evidence>
<keyword id="KW-0325">Glycoprotein</keyword>
<keyword id="KW-0472">Membrane</keyword>
<keyword id="KW-0560">Oxidoreductase</keyword>
<keyword id="KW-0812">Transmembrane</keyword>
<keyword id="KW-1133">Transmembrane helix</keyword>
<name>APRY_ASPFN</name>
<organism>
    <name type="scientific">Aspergillus flavus (strain ATCC 200026 / FGSC A1120 / IAM 13836 / NRRL 3357 / JCM 12722 / SRRC 167)</name>
    <dbReference type="NCBI Taxonomy" id="332952"/>
    <lineage>
        <taxon>Eukaryota</taxon>
        <taxon>Fungi</taxon>
        <taxon>Dikarya</taxon>
        <taxon>Ascomycota</taxon>
        <taxon>Pezizomycotina</taxon>
        <taxon>Eurotiomycetes</taxon>
        <taxon>Eurotiomycetidae</taxon>
        <taxon>Eurotiales</taxon>
        <taxon>Aspergillaceae</taxon>
        <taxon>Aspergillus</taxon>
        <taxon>Aspergillus subgen. Circumdati</taxon>
    </lineage>
</organism>
<protein>
    <recommendedName>
        <fullName evidence="7">UstYa family oxidase aprY</fullName>
        <ecNumber evidence="6">1.-.-.-</ecNumber>
    </recommendedName>
    <alternativeName>
        <fullName evidence="7">Asperipin-2a biosynthesis cluster protein Y</fullName>
    </alternativeName>
</protein>
<sequence length="334" mass="38809">MEPFSKFFKSFRRYHRFHPLDSSSASDDELAGKYEEHLLMDERLKRETVIFKSRIWILLTITNLIILGITVSMIVTSHCQLYAGKNADLRPISWWSPILDAIEIPTYETTLNGTFFAKPEVSIAREEPGPENDADWEQYETIRTHIVSREDILRLGKDPDTVMRFDNDYWGFGDDAYMVQLDVMHQIHCLNMLRKAAFHDYPGYVPTGAHTDANNTHASRWTHLGHCVDILLQNIQCNANTEVITLAWVEGRTQPWPDFSVNRKCRDFEAIYKWQLENSVDAGKFDRMPIPHDAYVWPAPWENRESELGEKLGKHQKQEGVLGQAGHQHTKRHE</sequence>
<feature type="chain" id="PRO_0000458379" description="UstYa family oxidase aprY">
    <location>
        <begin position="1"/>
        <end position="334"/>
    </location>
</feature>
<feature type="transmembrane region" description="Helical" evidence="2">
    <location>
        <begin position="55"/>
        <end position="75"/>
    </location>
</feature>
<feature type="region of interest" description="Disordered" evidence="4">
    <location>
        <begin position="306"/>
        <end position="334"/>
    </location>
</feature>
<feature type="short sequence motif" description="HXXHC 1" evidence="1">
    <location>
        <begin position="185"/>
        <end position="189"/>
    </location>
</feature>
<feature type="short sequence motif" description="HXXHC 2" evidence="1">
    <location>
        <begin position="223"/>
        <end position="227"/>
    </location>
</feature>
<feature type="compositionally biased region" description="Basic and acidic residues" evidence="4">
    <location>
        <begin position="306"/>
        <end position="318"/>
    </location>
</feature>
<feature type="glycosylation site" description="N-linked (GlcNAc...) asparagine" evidence="3">
    <location>
        <position position="112"/>
    </location>
</feature>
<feature type="glycosylation site" description="N-linked (GlcNAc...) asparagine" evidence="3">
    <location>
        <position position="214"/>
    </location>
</feature>
<dbReference type="EC" id="1.-.-.-" evidence="6"/>
<dbReference type="EMBL" id="EQ963476">
    <property type="protein sequence ID" value="EED52437.1"/>
    <property type="molecule type" value="Genomic_DNA"/>
</dbReference>
<dbReference type="EMBL" id="CP059872">
    <property type="protein sequence ID" value="QMW35052.1"/>
    <property type="molecule type" value="Genomic_DNA"/>
</dbReference>
<dbReference type="RefSeq" id="XP_002377601.1">
    <property type="nucleotide sequence ID" value="XM_002377560.1"/>
</dbReference>
<dbReference type="SMR" id="B8NCQ4"/>
<dbReference type="STRING" id="332952.B8NCQ4"/>
<dbReference type="EnsemblFungi" id="EED52437">
    <property type="protein sequence ID" value="EED52437"/>
    <property type="gene ID" value="AFLA_041390"/>
</dbReference>
<dbReference type="VEuPathDB" id="FungiDB:AFLA_007703"/>
<dbReference type="eggNOG" id="ENOG502S0D8">
    <property type="taxonomic scope" value="Eukaryota"/>
</dbReference>
<dbReference type="HOGENOM" id="CLU_042941_0_0_1"/>
<dbReference type="OMA" id="SHCTDIL"/>
<dbReference type="GO" id="GO:0016020">
    <property type="term" value="C:membrane"/>
    <property type="evidence" value="ECO:0007669"/>
    <property type="project" value="UniProtKB-SubCell"/>
</dbReference>
<dbReference type="GO" id="GO:0016491">
    <property type="term" value="F:oxidoreductase activity"/>
    <property type="evidence" value="ECO:0007669"/>
    <property type="project" value="UniProtKB-KW"/>
</dbReference>
<dbReference type="GO" id="GO:0043386">
    <property type="term" value="P:mycotoxin biosynthetic process"/>
    <property type="evidence" value="ECO:0007669"/>
    <property type="project" value="InterPro"/>
</dbReference>
<dbReference type="InterPro" id="IPR021765">
    <property type="entry name" value="UstYa-like"/>
</dbReference>
<dbReference type="PANTHER" id="PTHR33365:SF14">
    <property type="entry name" value="TAT PATHWAY SIGNAL SEQUENCE"/>
    <property type="match status" value="1"/>
</dbReference>
<dbReference type="PANTHER" id="PTHR33365">
    <property type="entry name" value="YALI0B05434P"/>
    <property type="match status" value="1"/>
</dbReference>
<dbReference type="Pfam" id="PF11807">
    <property type="entry name" value="UstYa"/>
    <property type="match status" value="1"/>
</dbReference>
<accession>B8NCQ4</accession>
<comment type="function">
    <text evidence="5 6 9">UstYa family oxidase; part of the gene cluster that mediates the biosynthesis of the asperipin-2a, a bicyclic peptide that possesses two macrocyclic ether rings consisting of 14- and 17-membered paracyclophans (PubMed:26703898, PubMed:30516224). Within the pathway, aprY is responsible for the synthesis of the bicyclic structure of asperipin-2a (PubMed:30516224). The pathway starts with the processing of the precursor aprA by kexin proteases to produce 11 identical copies of the hexapeptide Phe-Tyr-Tyr-Thr-Gly-Tyr. Macrocyclization of asperipin-2a may accompany an alpha-hydroxylation-dehydration sequence to give an imine, which is readily hydrolyzed to yield putative ketone intermediate. The reductase aprR may be required for the final reduction to yield asperipin-2a (Probable).</text>
</comment>
<comment type="pathway">
    <text evidence="5 6">Secondary metabolite biosynthesis.</text>
</comment>
<comment type="subcellular location">
    <subcellularLocation>
        <location evidence="2">Membrane</location>
        <topology evidence="2">Single-pass membrane protein</topology>
    </subcellularLocation>
</comment>
<comment type="domain">
    <text evidence="1">The 2 HXXHC motifs are conserved in ustYa family proteins and might form active sites.</text>
</comment>
<comment type="disruption phenotype">
    <text evidence="5">Abolishes the production of asperipin-2a.</text>
</comment>
<comment type="similarity">
    <text evidence="8">Belongs to the ustYa family.</text>
</comment>
<proteinExistence type="inferred from homology"/>
<gene>
    <name evidence="7" type="primary">aprY</name>
    <name type="ORF">AFLA_041390</name>
    <name type="ORF">G4B84_010543</name>
</gene>